<protein>
    <recommendedName>
        <fullName>Probable CAAX prenyl protease 1</fullName>
        <ecNumber>3.4.24.84</ecNumber>
    </recommendedName>
    <alternativeName>
        <fullName>Prenyl protein-specific endoprotease 1</fullName>
        <shortName>PPSEP 1</shortName>
    </alternativeName>
</protein>
<reference key="1">
    <citation type="journal article" date="2002" name="Nature">
        <title>The genome sequence of Schizosaccharomyces pombe.</title>
        <authorList>
            <person name="Wood V."/>
            <person name="Gwilliam R."/>
            <person name="Rajandream M.A."/>
            <person name="Lyne M.H."/>
            <person name="Lyne R."/>
            <person name="Stewart A."/>
            <person name="Sgouros J.G."/>
            <person name="Peat N."/>
            <person name="Hayles J."/>
            <person name="Baker S.G."/>
            <person name="Basham D."/>
            <person name="Bowman S."/>
            <person name="Brooks K."/>
            <person name="Brown D."/>
            <person name="Brown S."/>
            <person name="Chillingworth T."/>
            <person name="Churcher C.M."/>
            <person name="Collins M."/>
            <person name="Connor R."/>
            <person name="Cronin A."/>
            <person name="Davis P."/>
            <person name="Feltwell T."/>
            <person name="Fraser A."/>
            <person name="Gentles S."/>
            <person name="Goble A."/>
            <person name="Hamlin N."/>
            <person name="Harris D.E."/>
            <person name="Hidalgo J."/>
            <person name="Hodgson G."/>
            <person name="Holroyd S."/>
            <person name="Hornsby T."/>
            <person name="Howarth S."/>
            <person name="Huckle E.J."/>
            <person name="Hunt S."/>
            <person name="Jagels K."/>
            <person name="James K.D."/>
            <person name="Jones L."/>
            <person name="Jones M."/>
            <person name="Leather S."/>
            <person name="McDonald S."/>
            <person name="McLean J."/>
            <person name="Mooney P."/>
            <person name="Moule S."/>
            <person name="Mungall K.L."/>
            <person name="Murphy L.D."/>
            <person name="Niblett D."/>
            <person name="Odell C."/>
            <person name="Oliver K."/>
            <person name="O'Neil S."/>
            <person name="Pearson D."/>
            <person name="Quail M.A."/>
            <person name="Rabbinowitsch E."/>
            <person name="Rutherford K.M."/>
            <person name="Rutter S."/>
            <person name="Saunders D."/>
            <person name="Seeger K."/>
            <person name="Sharp S."/>
            <person name="Skelton J."/>
            <person name="Simmonds M.N."/>
            <person name="Squares R."/>
            <person name="Squares S."/>
            <person name="Stevens K."/>
            <person name="Taylor K."/>
            <person name="Taylor R.G."/>
            <person name="Tivey A."/>
            <person name="Walsh S.V."/>
            <person name="Warren T."/>
            <person name="Whitehead S."/>
            <person name="Woodward J.R."/>
            <person name="Volckaert G."/>
            <person name="Aert R."/>
            <person name="Robben J."/>
            <person name="Grymonprez B."/>
            <person name="Weltjens I."/>
            <person name="Vanstreels E."/>
            <person name="Rieger M."/>
            <person name="Schaefer M."/>
            <person name="Mueller-Auer S."/>
            <person name="Gabel C."/>
            <person name="Fuchs M."/>
            <person name="Duesterhoeft A."/>
            <person name="Fritzc C."/>
            <person name="Holzer E."/>
            <person name="Moestl D."/>
            <person name="Hilbert H."/>
            <person name="Borzym K."/>
            <person name="Langer I."/>
            <person name="Beck A."/>
            <person name="Lehrach H."/>
            <person name="Reinhardt R."/>
            <person name="Pohl T.M."/>
            <person name="Eger P."/>
            <person name="Zimmermann W."/>
            <person name="Wedler H."/>
            <person name="Wambutt R."/>
            <person name="Purnelle B."/>
            <person name="Goffeau A."/>
            <person name="Cadieu E."/>
            <person name="Dreano S."/>
            <person name="Gloux S."/>
            <person name="Lelaure V."/>
            <person name="Mottier S."/>
            <person name="Galibert F."/>
            <person name="Aves S.J."/>
            <person name="Xiang Z."/>
            <person name="Hunt C."/>
            <person name="Moore K."/>
            <person name="Hurst S.M."/>
            <person name="Lucas M."/>
            <person name="Rochet M."/>
            <person name="Gaillardin C."/>
            <person name="Tallada V.A."/>
            <person name="Garzon A."/>
            <person name="Thode G."/>
            <person name="Daga R.R."/>
            <person name="Cruzado L."/>
            <person name="Jimenez J."/>
            <person name="Sanchez M."/>
            <person name="del Rey F."/>
            <person name="Benito J."/>
            <person name="Dominguez A."/>
            <person name="Revuelta J.L."/>
            <person name="Moreno S."/>
            <person name="Armstrong J."/>
            <person name="Forsburg S.L."/>
            <person name="Cerutti L."/>
            <person name="Lowe T."/>
            <person name="McCombie W.R."/>
            <person name="Paulsen I."/>
            <person name="Potashkin J."/>
            <person name="Shpakovski G.V."/>
            <person name="Ussery D."/>
            <person name="Barrell B.G."/>
            <person name="Nurse P."/>
        </authorList>
    </citation>
    <scope>NUCLEOTIDE SEQUENCE [LARGE SCALE GENOMIC DNA]</scope>
    <source>
        <strain>972 / ATCC 24843</strain>
    </source>
</reference>
<keyword id="KW-0256">Endoplasmic reticulum</keyword>
<keyword id="KW-0378">Hydrolase</keyword>
<keyword id="KW-0472">Membrane</keyword>
<keyword id="KW-0479">Metal-binding</keyword>
<keyword id="KW-0482">Metalloprotease</keyword>
<keyword id="KW-0645">Protease</keyword>
<keyword id="KW-1185">Reference proteome</keyword>
<keyword id="KW-0812">Transmembrane</keyword>
<keyword id="KW-1133">Transmembrane helix</keyword>
<keyword id="KW-0862">Zinc</keyword>
<organism>
    <name type="scientific">Schizosaccharomyces pombe (strain 972 / ATCC 24843)</name>
    <name type="common">Fission yeast</name>
    <dbReference type="NCBI Taxonomy" id="284812"/>
    <lineage>
        <taxon>Eukaryota</taxon>
        <taxon>Fungi</taxon>
        <taxon>Dikarya</taxon>
        <taxon>Ascomycota</taxon>
        <taxon>Taphrinomycotina</taxon>
        <taxon>Schizosaccharomycetes</taxon>
        <taxon>Schizosaccharomycetales</taxon>
        <taxon>Schizosaccharomycetaceae</taxon>
        <taxon>Schizosaccharomyces</taxon>
    </lineage>
</organism>
<gene>
    <name type="ORF">SPAC3H1.05</name>
</gene>
<comment type="function">
    <text evidence="1">Proteolytically removes the C-terminal three residues of farnesylated proteins.</text>
</comment>
<comment type="catalytic activity">
    <reaction>
        <text>Hydrolyzes the peptide bond -P2-(S-farnesyl or geranylgeranyl)C-P1'-P2'-P3'-COOH where P1' and P2' are amino acids with aliphatic side chains and P3' is any C-terminal residue.</text>
        <dbReference type="EC" id="3.4.24.84"/>
    </reaction>
</comment>
<comment type="cofactor">
    <cofactor evidence="1">
        <name>Zn(2+)</name>
        <dbReference type="ChEBI" id="CHEBI:29105"/>
    </cofactor>
    <text evidence="1">Binds 1 zinc ion per subunit.</text>
</comment>
<comment type="subcellular location">
    <subcellularLocation>
        <location evidence="1">Endoplasmic reticulum membrane</location>
        <topology evidence="1">Multi-pass membrane protein</topology>
    </subcellularLocation>
</comment>
<comment type="similarity">
    <text evidence="4">Belongs to the peptidase M48A family.</text>
</comment>
<sequence>MSPGLCFLKEISVIQATPKPTTRSFANCCKMGILQHLMHILDIPGFPWKIVIAGFSIGKYAWDLYLRRRQVPYLLREKPPAILAEHVDEKKYQKALSYARDKSWFSTIVSTFTLAVDLLIIKYDGLSYLWNITKFPWMDKLAASSSRFSLSTSITHSCVFMFGLTLFSRLIQIPFNLYSTFVIEEKYGFNKSTLKIFVIDLLKELSLGGLLMSVVVGVFVKILTKFGDNFIMYAWGAYIVFGLILQTIAPSLIMPLFYKFTPLENGSLRTQIEELAASINFPLKKLYVIDASRRSTHSNAFFYGLPWNKGIVLFDTLVKNHTEPELIAILGHELGHWYMSHNLINTIIDYGMSLFHLFLFAAFIRNNSLYTSFNFITEKPVIVGLLLFSDALGPLSSILTFASNKVSRLCEYQADAFAKQLGYAKDLGDGLIRIHDDNLSPLEFDSLYTSYYHSHPILVDRLNAIDYTTLKKNN</sequence>
<feature type="chain" id="PRO_0000138847" description="Probable CAAX prenyl protease 1">
    <location>
        <begin position="1"/>
        <end position="474"/>
    </location>
</feature>
<feature type="transmembrane region" description="Helical" evidence="2">
    <location>
        <begin position="103"/>
        <end position="123"/>
    </location>
</feature>
<feature type="transmembrane region" description="Helical" evidence="2">
    <location>
        <begin position="196"/>
        <end position="216"/>
    </location>
</feature>
<feature type="transmembrane region" description="Helical" evidence="2">
    <location>
        <begin position="230"/>
        <end position="250"/>
    </location>
</feature>
<feature type="transmembrane region" description="Helical" evidence="2">
    <location>
        <begin position="344"/>
        <end position="364"/>
    </location>
</feature>
<feature type="transmembrane region" description="Helical" evidence="2">
    <location>
        <begin position="381"/>
        <end position="401"/>
    </location>
</feature>
<feature type="active site" evidence="3">
    <location>
        <position position="333"/>
    </location>
</feature>
<feature type="active site" description="Proton donor" evidence="3">
    <location>
        <position position="415"/>
    </location>
</feature>
<feature type="binding site" evidence="3">
    <location>
        <position position="332"/>
    </location>
    <ligand>
        <name>Zn(2+)</name>
        <dbReference type="ChEBI" id="CHEBI:29105"/>
        <note>catalytic</note>
    </ligand>
</feature>
<feature type="binding site" evidence="3">
    <location>
        <position position="336"/>
    </location>
    <ligand>
        <name>Zn(2+)</name>
        <dbReference type="ChEBI" id="CHEBI:29105"/>
        <note>catalytic</note>
    </ligand>
</feature>
<feature type="binding site" evidence="3">
    <location>
        <position position="411"/>
    </location>
    <ligand>
        <name>Zn(2+)</name>
        <dbReference type="ChEBI" id="CHEBI:29105"/>
        <note>catalytic</note>
    </ligand>
</feature>
<proteinExistence type="inferred from homology"/>
<name>STE24_SCHPO</name>
<evidence type="ECO:0000250" key="1"/>
<evidence type="ECO:0000255" key="2"/>
<evidence type="ECO:0000255" key="3">
    <source>
        <dbReference type="PROSITE-ProRule" id="PRU10095"/>
    </source>
</evidence>
<evidence type="ECO:0000305" key="4"/>
<accession>Q10071</accession>
<dbReference type="EC" id="3.4.24.84"/>
<dbReference type="EMBL" id="CU329670">
    <property type="protein sequence ID" value="CAA92258.1"/>
    <property type="molecule type" value="Genomic_DNA"/>
</dbReference>
<dbReference type="PIR" id="T38737">
    <property type="entry name" value="T38737"/>
</dbReference>
<dbReference type="RefSeq" id="NP_593547.1">
    <property type="nucleotide sequence ID" value="NM_001018980.2"/>
</dbReference>
<dbReference type="SMR" id="Q10071"/>
<dbReference type="BioGRID" id="279876">
    <property type="interactions" value="7"/>
</dbReference>
<dbReference type="FunCoup" id="Q10071">
    <property type="interactions" value="678"/>
</dbReference>
<dbReference type="STRING" id="284812.Q10071"/>
<dbReference type="PaxDb" id="4896-SPAC3H1.05.1"/>
<dbReference type="EnsemblFungi" id="SPAC3H1.05.1">
    <property type="protein sequence ID" value="SPAC3H1.05.1:pep"/>
    <property type="gene ID" value="SPAC3H1.05"/>
</dbReference>
<dbReference type="KEGG" id="spo:2543456"/>
<dbReference type="PomBase" id="SPAC3H1.05"/>
<dbReference type="VEuPathDB" id="FungiDB:SPAC3H1.05"/>
<dbReference type="eggNOG" id="KOG2719">
    <property type="taxonomic scope" value="Eukaryota"/>
</dbReference>
<dbReference type="HOGENOM" id="CLU_025947_3_3_1"/>
<dbReference type="InParanoid" id="Q10071"/>
<dbReference type="OMA" id="FVIEEKF"/>
<dbReference type="PhylomeDB" id="Q10071"/>
<dbReference type="PRO" id="PR:Q10071"/>
<dbReference type="Proteomes" id="UP000002485">
    <property type="component" value="Chromosome I"/>
</dbReference>
<dbReference type="GO" id="GO:0005783">
    <property type="term" value="C:endoplasmic reticulum"/>
    <property type="evidence" value="ECO:0007005"/>
    <property type="project" value="PomBase"/>
</dbReference>
<dbReference type="GO" id="GO:0005789">
    <property type="term" value="C:endoplasmic reticulum membrane"/>
    <property type="evidence" value="ECO:0000318"/>
    <property type="project" value="GO_Central"/>
</dbReference>
<dbReference type="GO" id="GO:0046872">
    <property type="term" value="F:metal ion binding"/>
    <property type="evidence" value="ECO:0007669"/>
    <property type="project" value="UniProtKB-KW"/>
</dbReference>
<dbReference type="GO" id="GO:0004222">
    <property type="term" value="F:metalloendopeptidase activity"/>
    <property type="evidence" value="ECO:0000318"/>
    <property type="project" value="GO_Central"/>
</dbReference>
<dbReference type="GO" id="GO:0071586">
    <property type="term" value="P:CAAX-box protein processing"/>
    <property type="evidence" value="ECO:0000318"/>
    <property type="project" value="GO_Central"/>
</dbReference>
<dbReference type="GO" id="GO:0031204">
    <property type="term" value="P:post-translational protein targeting to membrane, translocation"/>
    <property type="evidence" value="ECO:0000266"/>
    <property type="project" value="PomBase"/>
</dbReference>
<dbReference type="CDD" id="cd07343">
    <property type="entry name" value="M48A_Zmpste24p_like"/>
    <property type="match status" value="1"/>
</dbReference>
<dbReference type="FunFam" id="3.30.2010.10:FF:000002">
    <property type="entry name" value="CAAX prenyl protease"/>
    <property type="match status" value="1"/>
</dbReference>
<dbReference type="Gene3D" id="3.30.2010.10">
    <property type="entry name" value="Metalloproteases ('zincins'), catalytic domain"/>
    <property type="match status" value="1"/>
</dbReference>
<dbReference type="InterPro" id="IPR027057">
    <property type="entry name" value="CAXX_Prtase_1"/>
</dbReference>
<dbReference type="InterPro" id="IPR001915">
    <property type="entry name" value="Peptidase_M48"/>
</dbReference>
<dbReference type="InterPro" id="IPR032456">
    <property type="entry name" value="Peptidase_M48_N"/>
</dbReference>
<dbReference type="PANTHER" id="PTHR10120">
    <property type="entry name" value="CAAX PRENYL PROTEASE 1"/>
    <property type="match status" value="1"/>
</dbReference>
<dbReference type="Pfam" id="PF01435">
    <property type="entry name" value="Peptidase_M48"/>
    <property type="match status" value="1"/>
</dbReference>
<dbReference type="Pfam" id="PF16491">
    <property type="entry name" value="Peptidase_M48_N"/>
    <property type="match status" value="1"/>
</dbReference>
<dbReference type="PROSITE" id="PS00142">
    <property type="entry name" value="ZINC_PROTEASE"/>
    <property type="match status" value="1"/>
</dbReference>